<feature type="chain" id="PRO_0000417664" description="Probable trehalase">
    <location>
        <begin position="1"/>
        <end position="563"/>
    </location>
</feature>
<feature type="active site" description="Proton donor/acceptor" evidence="1">
    <location>
        <position position="309"/>
    </location>
</feature>
<feature type="active site" description="Proton donor/acceptor" evidence="1">
    <location>
        <position position="517"/>
    </location>
</feature>
<feature type="binding site" evidence="1">
    <location>
        <position position="154"/>
    </location>
    <ligand>
        <name>substrate</name>
    </ligand>
</feature>
<feature type="binding site" evidence="1">
    <location>
        <begin position="161"/>
        <end position="162"/>
    </location>
    <ligand>
        <name>substrate</name>
    </ligand>
</feature>
<feature type="binding site" evidence="1">
    <location>
        <position position="198"/>
    </location>
    <ligand>
        <name>substrate</name>
    </ligand>
</feature>
<feature type="binding site" evidence="1">
    <location>
        <begin position="207"/>
        <end position="209"/>
    </location>
    <ligand>
        <name>substrate</name>
    </ligand>
</feature>
<feature type="binding site" evidence="1">
    <location>
        <begin position="274"/>
        <end position="276"/>
    </location>
    <ligand>
        <name>substrate</name>
    </ligand>
</feature>
<feature type="binding site" evidence="1">
    <location>
        <position position="307"/>
    </location>
    <ligand>
        <name>substrate</name>
    </ligand>
</feature>
<feature type="binding site" evidence="1">
    <location>
        <position position="532"/>
    </location>
    <ligand>
        <name>substrate</name>
    </ligand>
</feature>
<name>TRE_ORYSJ</name>
<sequence>MAPTAAVAGGGVEAEALLGLLQRVQSEALRAFGPNDFDPKLYVDLPLAADASAAAALASLPRAAPSRGEMEAYISRYFALAGSDLVAAADPPDFERDPPGFLPRVERAEARAWALEVHALWKDLTRRVAPAVAARPDRHTLLPLPGRVVVPGSRFREVYYWDSYWVVRGLLVSKMYETAKDIVLNLVYLVEKYGFVLNGARSYYTNRSQPPLLSSMVLDIYMATGDMAFVRRVFPSLLKEHSFWMSEVHNVAVMDNHGRVHNLSRYQAMWNKPRPESATIDEEFASKLSTAAKEKFYHQVASTAETGWDFSSRWMRDSTDMTTLTTSCIIPVDLNTFILKMEQDIAFFAKLIGESTTSEIFSEASKARHNAIDSVLWNADMEQWLDYWLPTDGNCQGVYQWKSISQNRAIFASNFVPLWLNAQHSGLEQFVDEAKSVRVMRSLQKSGLLQPAGIATSLSNTGQQWDFPNGWAPLQHLIVEGLLRSGSGEARELAEDIATRWVRTNYDAYKATGAMHEKYDVVTCGKSGGGGEYKPQTGFGWSNGVILSFLDEFGWPQDKKIDC</sequence>
<organism>
    <name type="scientific">Oryza sativa subsp. japonica</name>
    <name type="common">Rice</name>
    <dbReference type="NCBI Taxonomy" id="39947"/>
    <lineage>
        <taxon>Eukaryota</taxon>
        <taxon>Viridiplantae</taxon>
        <taxon>Streptophyta</taxon>
        <taxon>Embryophyta</taxon>
        <taxon>Tracheophyta</taxon>
        <taxon>Spermatophyta</taxon>
        <taxon>Magnoliopsida</taxon>
        <taxon>Liliopsida</taxon>
        <taxon>Poales</taxon>
        <taxon>Poaceae</taxon>
        <taxon>BOP clade</taxon>
        <taxon>Oryzoideae</taxon>
        <taxon>Oryzeae</taxon>
        <taxon>Oryzinae</taxon>
        <taxon>Oryza</taxon>
        <taxon>Oryza sativa</taxon>
    </lineage>
</organism>
<comment type="function">
    <text evidence="1">Involved in the regulation of trehalose content by hydrolyzing trehalose to glucose.</text>
</comment>
<comment type="catalytic activity">
    <reaction>
        <text>alpha,alpha-trehalose + H2O = alpha-D-glucose + beta-D-glucose</text>
        <dbReference type="Rhea" id="RHEA:32675"/>
        <dbReference type="ChEBI" id="CHEBI:15377"/>
        <dbReference type="ChEBI" id="CHEBI:15903"/>
        <dbReference type="ChEBI" id="CHEBI:16551"/>
        <dbReference type="ChEBI" id="CHEBI:17925"/>
        <dbReference type="EC" id="3.2.1.28"/>
    </reaction>
</comment>
<comment type="similarity">
    <text evidence="2">Belongs to the glycosyl hydrolase 37 family.</text>
</comment>
<accession>Q9FWC1</accession>
<accession>A0A0P0XWC5</accession>
<accession>Q7XCP2</accession>
<evidence type="ECO:0000250" key="1"/>
<evidence type="ECO:0000305" key="2"/>
<reference key="1">
    <citation type="journal article" date="2003" name="Science">
        <title>In-depth view of structure, activity, and evolution of rice chromosome 10.</title>
        <authorList>
            <person name="Yu Y."/>
            <person name="Rambo T."/>
            <person name="Currie J."/>
            <person name="Saski C."/>
            <person name="Kim H.-R."/>
            <person name="Collura K."/>
            <person name="Thompson S."/>
            <person name="Simmons J."/>
            <person name="Yang T.-J."/>
            <person name="Nah G."/>
            <person name="Patel A.J."/>
            <person name="Thurmond S."/>
            <person name="Henry D."/>
            <person name="Oates R."/>
            <person name="Palmer M."/>
            <person name="Pries G."/>
            <person name="Gibson J."/>
            <person name="Anderson H."/>
            <person name="Paradkar M."/>
            <person name="Crane L."/>
            <person name="Dale J."/>
            <person name="Carver M.B."/>
            <person name="Wood T."/>
            <person name="Frisch D."/>
            <person name="Engler F."/>
            <person name="Soderlund C."/>
            <person name="Palmer L.E."/>
            <person name="Teytelman L."/>
            <person name="Nascimento L."/>
            <person name="De la Bastide M."/>
            <person name="Spiegel L."/>
            <person name="Ware D."/>
            <person name="O'Shaughnessy A."/>
            <person name="Dike S."/>
            <person name="Dedhia N."/>
            <person name="Preston R."/>
            <person name="Huang E."/>
            <person name="Ferraro K."/>
            <person name="Kuit K."/>
            <person name="Miller B."/>
            <person name="Zutavern T."/>
            <person name="Katzenberger F."/>
            <person name="Muller S."/>
            <person name="Balija V."/>
            <person name="Martienssen R.A."/>
            <person name="Stein L."/>
            <person name="Minx P."/>
            <person name="Johnson D."/>
            <person name="Cordum H."/>
            <person name="Mardis E."/>
            <person name="Cheng Z."/>
            <person name="Jiang J."/>
            <person name="Wilson R."/>
            <person name="McCombie W.R."/>
            <person name="Wing R.A."/>
            <person name="Yuan Q."/>
            <person name="Ouyang S."/>
            <person name="Liu J."/>
            <person name="Jones K.M."/>
            <person name="Gansberger K."/>
            <person name="Moffat K."/>
            <person name="Hill J."/>
            <person name="Tsitrin T."/>
            <person name="Overton L."/>
            <person name="Bera J."/>
            <person name="Kim M."/>
            <person name="Jin S."/>
            <person name="Tallon L."/>
            <person name="Ciecko A."/>
            <person name="Pai G."/>
            <person name="Van Aken S."/>
            <person name="Utterback T."/>
            <person name="Reidmuller S."/>
            <person name="Bormann J."/>
            <person name="Feldblyum T."/>
            <person name="Hsiao J."/>
            <person name="Zismann V."/>
            <person name="Blunt S."/>
            <person name="de Vazeille A.R."/>
            <person name="Shaffer T."/>
            <person name="Koo H."/>
            <person name="Suh B."/>
            <person name="Yang Q."/>
            <person name="Haas B."/>
            <person name="Peterson J."/>
            <person name="Pertea M."/>
            <person name="Volfovsky N."/>
            <person name="Wortman J."/>
            <person name="White O."/>
            <person name="Salzberg S.L."/>
            <person name="Fraser C.M."/>
            <person name="Buell C.R."/>
            <person name="Messing J."/>
            <person name="Song R."/>
            <person name="Fuks G."/>
            <person name="Llaca V."/>
            <person name="Kovchak S."/>
            <person name="Young S."/>
            <person name="Bowers J.E."/>
            <person name="Paterson A.H."/>
            <person name="Johns M.A."/>
            <person name="Mao L."/>
            <person name="Pan H."/>
            <person name="Dean R.A."/>
        </authorList>
    </citation>
    <scope>NUCLEOTIDE SEQUENCE [LARGE SCALE GENOMIC DNA]</scope>
    <source>
        <strain>cv. Nipponbare</strain>
    </source>
</reference>
<reference key="2">
    <citation type="journal article" date="2005" name="Nature">
        <title>The map-based sequence of the rice genome.</title>
        <authorList>
            <consortium name="International rice genome sequencing project (IRGSP)"/>
        </authorList>
    </citation>
    <scope>NUCLEOTIDE SEQUENCE [LARGE SCALE GENOMIC DNA]</scope>
    <source>
        <strain>cv. Nipponbare</strain>
    </source>
</reference>
<reference key="3">
    <citation type="journal article" date="2008" name="Nucleic Acids Res.">
        <title>The rice annotation project database (RAP-DB): 2008 update.</title>
        <authorList>
            <consortium name="The rice annotation project (RAP)"/>
        </authorList>
    </citation>
    <scope>GENOME REANNOTATION</scope>
    <source>
        <strain>cv. Nipponbare</strain>
    </source>
</reference>
<reference key="4">
    <citation type="journal article" date="2013" name="Rice">
        <title>Improvement of the Oryza sativa Nipponbare reference genome using next generation sequence and optical map data.</title>
        <authorList>
            <person name="Kawahara Y."/>
            <person name="de la Bastide M."/>
            <person name="Hamilton J.P."/>
            <person name="Kanamori H."/>
            <person name="McCombie W.R."/>
            <person name="Ouyang S."/>
            <person name="Schwartz D.C."/>
            <person name="Tanaka T."/>
            <person name="Wu J."/>
            <person name="Zhou S."/>
            <person name="Childs K.L."/>
            <person name="Davidson R.M."/>
            <person name="Lin H."/>
            <person name="Quesada-Ocampo L."/>
            <person name="Vaillancourt B."/>
            <person name="Sakai H."/>
            <person name="Lee S.S."/>
            <person name="Kim J."/>
            <person name="Numa H."/>
            <person name="Itoh T."/>
            <person name="Buell C.R."/>
            <person name="Matsumoto T."/>
        </authorList>
    </citation>
    <scope>GENOME REANNOTATION</scope>
    <source>
        <strain>cv. Nipponbare</strain>
    </source>
</reference>
<reference key="5">
    <citation type="journal article" date="2003" name="Science">
        <title>Collection, mapping, and annotation of over 28,000 cDNA clones from japonica rice.</title>
        <authorList>
            <consortium name="The rice full-length cDNA consortium"/>
        </authorList>
    </citation>
    <scope>NUCLEOTIDE SEQUENCE [LARGE SCALE MRNA]</scope>
    <source>
        <strain>cv. Nipponbare</strain>
    </source>
</reference>
<dbReference type="EC" id="3.2.1.28"/>
<dbReference type="EMBL" id="AC051634">
    <property type="protein sequence ID" value="AAG13442.1"/>
    <property type="molecule type" value="Genomic_DNA"/>
</dbReference>
<dbReference type="EMBL" id="DP000086">
    <property type="protein sequence ID" value="AAP54665.1"/>
    <property type="molecule type" value="Genomic_DNA"/>
</dbReference>
<dbReference type="EMBL" id="AP008216">
    <property type="protein sequence ID" value="BAF27001.1"/>
    <property type="molecule type" value="Genomic_DNA"/>
</dbReference>
<dbReference type="EMBL" id="AP014966">
    <property type="protein sequence ID" value="BAT11704.1"/>
    <property type="molecule type" value="Genomic_DNA"/>
</dbReference>
<dbReference type="EMBL" id="AK108163">
    <property type="protein sequence ID" value="BAG98305.1"/>
    <property type="molecule type" value="mRNA"/>
</dbReference>
<dbReference type="SMR" id="Q9FWC1"/>
<dbReference type="FunCoup" id="Q9FWC1">
    <property type="interactions" value="1876"/>
</dbReference>
<dbReference type="STRING" id="39947.Q9FWC1"/>
<dbReference type="CAZy" id="GH37">
    <property type="family name" value="Glycoside Hydrolase Family 37"/>
</dbReference>
<dbReference type="PaxDb" id="39947-Q9FWC1"/>
<dbReference type="EnsemblPlants" id="Os10t0521000-01">
    <property type="protein sequence ID" value="Os10t0521000-01"/>
    <property type="gene ID" value="Os10g0521000"/>
</dbReference>
<dbReference type="Gramene" id="Os10t0521000-01">
    <property type="protein sequence ID" value="Os10t0521000-01"/>
    <property type="gene ID" value="Os10g0521000"/>
</dbReference>
<dbReference type="KEGG" id="dosa:Os10g0521000"/>
<dbReference type="eggNOG" id="KOG0602">
    <property type="taxonomic scope" value="Eukaryota"/>
</dbReference>
<dbReference type="HOGENOM" id="CLU_006451_4_2_1"/>
<dbReference type="InParanoid" id="Q9FWC1"/>
<dbReference type="OMA" id="RYWDASD"/>
<dbReference type="PlantReactome" id="R-OSA-1119601">
    <property type="pathway name" value="Trehalose degradation II"/>
</dbReference>
<dbReference type="Proteomes" id="UP000000763">
    <property type="component" value="Chromosome 10"/>
</dbReference>
<dbReference type="Proteomes" id="UP000059680">
    <property type="component" value="Chromosome 10"/>
</dbReference>
<dbReference type="GO" id="GO:0005886">
    <property type="term" value="C:plasma membrane"/>
    <property type="evidence" value="ECO:0007669"/>
    <property type="project" value="EnsemblPlants"/>
</dbReference>
<dbReference type="GO" id="GO:0004555">
    <property type="term" value="F:alpha,alpha-trehalase activity"/>
    <property type="evidence" value="ECO:0000318"/>
    <property type="project" value="GO_Central"/>
</dbReference>
<dbReference type="GO" id="GO:0005993">
    <property type="term" value="P:trehalose catabolic process"/>
    <property type="evidence" value="ECO:0000318"/>
    <property type="project" value="GO_Central"/>
</dbReference>
<dbReference type="Gene3D" id="1.50.10.10">
    <property type="match status" value="1"/>
</dbReference>
<dbReference type="InterPro" id="IPR008928">
    <property type="entry name" value="6-hairpin_glycosidase_sf"/>
</dbReference>
<dbReference type="InterPro" id="IPR012341">
    <property type="entry name" value="6hp_glycosidase-like_sf"/>
</dbReference>
<dbReference type="InterPro" id="IPR001661">
    <property type="entry name" value="Glyco_hydro_37"/>
</dbReference>
<dbReference type="InterPro" id="IPR018232">
    <property type="entry name" value="Glyco_hydro_37_CS"/>
</dbReference>
<dbReference type="PANTHER" id="PTHR23403">
    <property type="entry name" value="TREHALASE"/>
    <property type="match status" value="1"/>
</dbReference>
<dbReference type="PANTHER" id="PTHR23403:SF1">
    <property type="entry name" value="TREHALASE"/>
    <property type="match status" value="1"/>
</dbReference>
<dbReference type="Pfam" id="PF01204">
    <property type="entry name" value="Trehalase"/>
    <property type="match status" value="1"/>
</dbReference>
<dbReference type="PRINTS" id="PR00744">
    <property type="entry name" value="GLHYDRLASE37"/>
</dbReference>
<dbReference type="SUPFAM" id="SSF48208">
    <property type="entry name" value="Six-hairpin glycosidases"/>
    <property type="match status" value="1"/>
</dbReference>
<dbReference type="PROSITE" id="PS00928">
    <property type="entry name" value="TREHALASE_2"/>
    <property type="match status" value="1"/>
</dbReference>
<protein>
    <recommendedName>
        <fullName>Probable trehalase</fullName>
        <ecNumber>3.2.1.28</ecNumber>
    </recommendedName>
    <alternativeName>
        <fullName>Alpha,alpha-trehalase</fullName>
    </alternativeName>
    <alternativeName>
        <fullName>Alpha,alpha-trehalose glucohydrolase</fullName>
    </alternativeName>
</protein>
<proteinExistence type="evidence at transcript level"/>
<keyword id="KW-0326">Glycosidase</keyword>
<keyword id="KW-0378">Hydrolase</keyword>
<keyword id="KW-1185">Reference proteome</keyword>
<keyword id="KW-0346">Stress response</keyword>
<gene>
    <name type="ordered locus">Os10g0521000</name>
    <name type="ordered locus">LOC_Os10g37660</name>
    <name type="ORF">OSJNBb0018B10.19</name>
</gene>